<gene>
    <name evidence="4" type="primary">MCU4</name>
    <name evidence="7" type="ordered locus">At4g36820</name>
    <name evidence="9" type="ORF">AP22.5</name>
    <name evidence="8" type="ORF">C7A10.540</name>
</gene>
<reference key="1">
    <citation type="journal article" date="1998" name="Nature">
        <title>Analysis of 1.9 Mb of contiguous sequence from chromosome 4 of Arabidopsis thaliana.</title>
        <authorList>
            <person name="Bevan M."/>
            <person name="Bancroft I."/>
            <person name="Bent E."/>
            <person name="Love K."/>
            <person name="Goodman H.M."/>
            <person name="Dean C."/>
            <person name="Bergkamp R."/>
            <person name="Dirkse W."/>
            <person name="van Staveren M."/>
            <person name="Stiekema W."/>
            <person name="Drost L."/>
            <person name="Ridley P."/>
            <person name="Hudson S.-A."/>
            <person name="Patel K."/>
            <person name="Murphy G."/>
            <person name="Piffanelli P."/>
            <person name="Wedler H."/>
            <person name="Wedler E."/>
            <person name="Wambutt R."/>
            <person name="Weitzenegger T."/>
            <person name="Pohl T."/>
            <person name="Terryn N."/>
            <person name="Gielen J."/>
            <person name="Villarroel R."/>
            <person name="De Clercq R."/>
            <person name="van Montagu M."/>
            <person name="Lecharny A."/>
            <person name="Aubourg S."/>
            <person name="Gy I."/>
            <person name="Kreis M."/>
            <person name="Lao N."/>
            <person name="Kavanagh T."/>
            <person name="Hempel S."/>
            <person name="Kotter P."/>
            <person name="Entian K.-D."/>
            <person name="Rieger M."/>
            <person name="Schaefer M."/>
            <person name="Funk B."/>
            <person name="Mueller-Auer S."/>
            <person name="Silvey M."/>
            <person name="James R."/>
            <person name="Monfort A."/>
            <person name="Pons A."/>
            <person name="Puigdomenech P."/>
            <person name="Douka A."/>
            <person name="Voukelatou E."/>
            <person name="Milioni D."/>
            <person name="Hatzopoulos P."/>
            <person name="Piravandi E."/>
            <person name="Obermaier B."/>
            <person name="Hilbert H."/>
            <person name="Duesterhoeft A."/>
            <person name="Moores T."/>
            <person name="Jones J.D.G."/>
            <person name="Eneva T."/>
            <person name="Palme K."/>
            <person name="Benes V."/>
            <person name="Rechmann S."/>
            <person name="Ansorge W."/>
            <person name="Cooke R."/>
            <person name="Berger C."/>
            <person name="Delseny M."/>
            <person name="Voet M."/>
            <person name="Volckaert G."/>
            <person name="Mewes H.-W."/>
            <person name="Klosterman S."/>
            <person name="Schueller C."/>
            <person name="Chalwatzis N."/>
        </authorList>
    </citation>
    <scope>NUCLEOTIDE SEQUENCE [LARGE SCALE GENOMIC DNA]</scope>
    <source>
        <strain>cv. Columbia</strain>
    </source>
</reference>
<reference key="2">
    <citation type="journal article" date="1999" name="Nature">
        <title>Sequence and analysis of chromosome 4 of the plant Arabidopsis thaliana.</title>
        <authorList>
            <person name="Mayer K.F.X."/>
            <person name="Schueller C."/>
            <person name="Wambutt R."/>
            <person name="Murphy G."/>
            <person name="Volckaert G."/>
            <person name="Pohl T."/>
            <person name="Duesterhoeft A."/>
            <person name="Stiekema W."/>
            <person name="Entian K.-D."/>
            <person name="Terryn N."/>
            <person name="Harris B."/>
            <person name="Ansorge W."/>
            <person name="Brandt P."/>
            <person name="Grivell L.A."/>
            <person name="Rieger M."/>
            <person name="Weichselgartner M."/>
            <person name="de Simone V."/>
            <person name="Obermaier B."/>
            <person name="Mache R."/>
            <person name="Mueller M."/>
            <person name="Kreis M."/>
            <person name="Delseny M."/>
            <person name="Puigdomenech P."/>
            <person name="Watson M."/>
            <person name="Schmidtheini T."/>
            <person name="Reichert B."/>
            <person name="Portetelle D."/>
            <person name="Perez-Alonso M."/>
            <person name="Boutry M."/>
            <person name="Bancroft I."/>
            <person name="Vos P."/>
            <person name="Hoheisel J."/>
            <person name="Zimmermann W."/>
            <person name="Wedler H."/>
            <person name="Ridley P."/>
            <person name="Langham S.-A."/>
            <person name="McCullagh B."/>
            <person name="Bilham L."/>
            <person name="Robben J."/>
            <person name="van der Schueren J."/>
            <person name="Grymonprez B."/>
            <person name="Chuang Y.-J."/>
            <person name="Vandenbussche F."/>
            <person name="Braeken M."/>
            <person name="Weltjens I."/>
            <person name="Voet M."/>
            <person name="Bastiaens I."/>
            <person name="Aert R."/>
            <person name="Defoor E."/>
            <person name="Weitzenegger T."/>
            <person name="Bothe G."/>
            <person name="Ramsperger U."/>
            <person name="Hilbert H."/>
            <person name="Braun M."/>
            <person name="Holzer E."/>
            <person name="Brandt A."/>
            <person name="Peters S."/>
            <person name="van Staveren M."/>
            <person name="Dirkse W."/>
            <person name="Mooijman P."/>
            <person name="Klein Lankhorst R."/>
            <person name="Rose M."/>
            <person name="Hauf J."/>
            <person name="Koetter P."/>
            <person name="Berneiser S."/>
            <person name="Hempel S."/>
            <person name="Feldpausch M."/>
            <person name="Lamberth S."/>
            <person name="Van den Daele H."/>
            <person name="De Keyser A."/>
            <person name="Buysshaert C."/>
            <person name="Gielen J."/>
            <person name="Villarroel R."/>
            <person name="De Clercq R."/>
            <person name="van Montagu M."/>
            <person name="Rogers J."/>
            <person name="Cronin A."/>
            <person name="Quail M.A."/>
            <person name="Bray-Allen S."/>
            <person name="Clark L."/>
            <person name="Doggett J."/>
            <person name="Hall S."/>
            <person name="Kay M."/>
            <person name="Lennard N."/>
            <person name="McLay K."/>
            <person name="Mayes R."/>
            <person name="Pettett A."/>
            <person name="Rajandream M.A."/>
            <person name="Lyne M."/>
            <person name="Benes V."/>
            <person name="Rechmann S."/>
            <person name="Borkova D."/>
            <person name="Bloecker H."/>
            <person name="Scharfe M."/>
            <person name="Grimm M."/>
            <person name="Loehnert T.-H."/>
            <person name="Dose S."/>
            <person name="de Haan M."/>
            <person name="Maarse A.C."/>
            <person name="Schaefer M."/>
            <person name="Mueller-Auer S."/>
            <person name="Gabel C."/>
            <person name="Fuchs M."/>
            <person name="Fartmann B."/>
            <person name="Granderath K."/>
            <person name="Dauner D."/>
            <person name="Herzl A."/>
            <person name="Neumann S."/>
            <person name="Argiriou A."/>
            <person name="Vitale D."/>
            <person name="Liguori R."/>
            <person name="Piravandi E."/>
            <person name="Massenet O."/>
            <person name="Quigley F."/>
            <person name="Clabauld G."/>
            <person name="Muendlein A."/>
            <person name="Felber R."/>
            <person name="Schnabl S."/>
            <person name="Hiller R."/>
            <person name="Schmidt W."/>
            <person name="Lecharny A."/>
            <person name="Aubourg S."/>
            <person name="Chefdor F."/>
            <person name="Cooke R."/>
            <person name="Berger C."/>
            <person name="Monfort A."/>
            <person name="Casacuberta E."/>
            <person name="Gibbons T."/>
            <person name="Weber N."/>
            <person name="Vandenbol M."/>
            <person name="Bargues M."/>
            <person name="Terol J."/>
            <person name="Torres A."/>
            <person name="Perez-Perez A."/>
            <person name="Purnelle B."/>
            <person name="Bent E."/>
            <person name="Johnson S."/>
            <person name="Tacon D."/>
            <person name="Jesse T."/>
            <person name="Heijnen L."/>
            <person name="Schwarz S."/>
            <person name="Scholler P."/>
            <person name="Heber S."/>
            <person name="Francs P."/>
            <person name="Bielke C."/>
            <person name="Frishman D."/>
            <person name="Haase D."/>
            <person name="Lemcke K."/>
            <person name="Mewes H.-W."/>
            <person name="Stocker S."/>
            <person name="Zaccaria P."/>
            <person name="Bevan M."/>
            <person name="Wilson R.K."/>
            <person name="de la Bastide M."/>
            <person name="Habermann K."/>
            <person name="Parnell L."/>
            <person name="Dedhia N."/>
            <person name="Gnoj L."/>
            <person name="Schutz K."/>
            <person name="Huang E."/>
            <person name="Spiegel L."/>
            <person name="Sekhon M."/>
            <person name="Murray J."/>
            <person name="Sheet P."/>
            <person name="Cordes M."/>
            <person name="Abu-Threideh J."/>
            <person name="Stoneking T."/>
            <person name="Kalicki J."/>
            <person name="Graves T."/>
            <person name="Harmon G."/>
            <person name="Edwards J."/>
            <person name="Latreille P."/>
            <person name="Courtney L."/>
            <person name="Cloud J."/>
            <person name="Abbott A."/>
            <person name="Scott K."/>
            <person name="Johnson D."/>
            <person name="Minx P."/>
            <person name="Bentley D."/>
            <person name="Fulton B."/>
            <person name="Miller N."/>
            <person name="Greco T."/>
            <person name="Kemp K."/>
            <person name="Kramer J."/>
            <person name="Fulton L."/>
            <person name="Mardis E."/>
            <person name="Dante M."/>
            <person name="Pepin K."/>
            <person name="Hillier L.W."/>
            <person name="Nelson J."/>
            <person name="Spieth J."/>
            <person name="Ryan E."/>
            <person name="Andrews S."/>
            <person name="Geisel C."/>
            <person name="Layman D."/>
            <person name="Du H."/>
            <person name="Ali J."/>
            <person name="Berghoff A."/>
            <person name="Jones K."/>
            <person name="Drone K."/>
            <person name="Cotton M."/>
            <person name="Joshu C."/>
            <person name="Antonoiu B."/>
            <person name="Zidanic M."/>
            <person name="Strong C."/>
            <person name="Sun H."/>
            <person name="Lamar B."/>
            <person name="Yordan C."/>
            <person name="Ma P."/>
            <person name="Zhong J."/>
            <person name="Preston R."/>
            <person name="Vil D."/>
            <person name="Shekher M."/>
            <person name="Matero A."/>
            <person name="Shah R."/>
            <person name="Swaby I.K."/>
            <person name="O'Shaughnessy A."/>
            <person name="Rodriguez M."/>
            <person name="Hoffman J."/>
            <person name="Till S."/>
            <person name="Granat S."/>
            <person name="Shohdy N."/>
            <person name="Hasegawa A."/>
            <person name="Hameed A."/>
            <person name="Lodhi M."/>
            <person name="Johnson A."/>
            <person name="Chen E."/>
            <person name="Marra M.A."/>
            <person name="Martienssen R."/>
            <person name="McCombie W.R."/>
        </authorList>
    </citation>
    <scope>NUCLEOTIDE SEQUENCE [LARGE SCALE GENOMIC DNA]</scope>
    <source>
        <strain>cv. Columbia</strain>
    </source>
</reference>
<reference key="3">
    <citation type="journal article" date="2017" name="Plant J.">
        <title>Araport11: a complete reannotation of the Arabidopsis thaliana reference genome.</title>
        <authorList>
            <person name="Cheng C.Y."/>
            <person name="Krishnakumar V."/>
            <person name="Chan A.P."/>
            <person name="Thibaud-Nissen F."/>
            <person name="Schobel S."/>
            <person name="Town C.D."/>
        </authorList>
    </citation>
    <scope>GENOME REANNOTATION</scope>
    <source>
        <strain>cv. Columbia</strain>
    </source>
</reference>
<reference key="4">
    <citation type="journal article" date="2006" name="Plant Biotechnol. J.">
        <title>Simultaneous high-throughput recombinational cloning of open reading frames in closed and open configurations.</title>
        <authorList>
            <person name="Underwood B.A."/>
            <person name="Vanderhaeghen R."/>
            <person name="Whitford R."/>
            <person name="Town C.D."/>
            <person name="Hilson P."/>
        </authorList>
    </citation>
    <scope>NUCLEOTIDE SEQUENCE [LARGE SCALE MRNA]</scope>
    <source>
        <strain>cv. Columbia</strain>
    </source>
</reference>
<reference key="5">
    <citation type="journal article" date="2012" name="J. Exp. Bot.">
        <title>Plant organellar calcium signalling: an emerging field.</title>
        <authorList>
            <person name="Stael S."/>
            <person name="Wurzinger B."/>
            <person name="Mair A."/>
            <person name="Mehlmer N."/>
            <person name="Vothknecht U.C."/>
            <person name="Teige M."/>
        </authorList>
    </citation>
    <scope>GENE FAMILY</scope>
    <scope>REVIEW</scope>
</reference>
<reference key="6">
    <citation type="journal article" date="2017" name="Plant Physiol.">
        <title>Physiological Characterization of a Plant Mitochondrial Calcium Uniporter in Vitro and in Vivo.</title>
        <authorList>
            <person name="Teardo E."/>
            <person name="Carraretto L."/>
            <person name="Wagner S."/>
            <person name="Formentin E."/>
            <person name="Behera S."/>
            <person name="De Bortoli S."/>
            <person name="Larosa V."/>
            <person name="Fuchs P."/>
            <person name="Lo Schiavo F."/>
            <person name="Raffaello A."/>
            <person name="Rizzuto R."/>
            <person name="Costa A."/>
            <person name="Schwarzlaender M."/>
            <person name="Szabo I."/>
        </authorList>
    </citation>
    <scope>SUBCELLULAR LOCATION</scope>
    <scope>NOMENCLATURE</scope>
</reference>
<name>MCU4_ARATH</name>
<evidence type="ECO:0000250" key="1">
    <source>
        <dbReference type="UniProtKB" id="F4I111"/>
    </source>
</evidence>
<evidence type="ECO:0000250" key="2">
    <source>
        <dbReference type="UniProtKB" id="Q8NE86"/>
    </source>
</evidence>
<evidence type="ECO:0000255" key="3"/>
<evidence type="ECO:0000303" key="4">
    <source>
    </source>
</evidence>
<evidence type="ECO:0000305" key="5"/>
<evidence type="ECO:0000305" key="6">
    <source>
    </source>
</evidence>
<evidence type="ECO:0000312" key="7">
    <source>
        <dbReference type="Araport" id="AT4G36820"/>
    </source>
</evidence>
<evidence type="ECO:0000312" key="8">
    <source>
        <dbReference type="EMBL" id="CAB16819.1"/>
    </source>
</evidence>
<evidence type="ECO:0000312" key="9">
    <source>
        <dbReference type="EMBL" id="CAB80348.1"/>
    </source>
</evidence>
<sequence>MVMMKKLLSNRLFNMSKTASQSLMNCRTSSSSSLAMRTRVPKDIGEATIDPEPGDLTISQRFLNKFSMNGIDTTSKMSIGESLMEKLKEMDMNKDRIRLDGLSHPKEETLGLTVQDVKKLLRAAEIEVIKTKLMETGKIWIRYSDFLGVCSDSSLDPSQGALIAKMLDDSGNVIVMGNSVCLRPHQLTKSIEGLLPLSQIHNPNDPRRKELNELEAIKTVIDQKAHSLVRRELWAGLGYLIIQTAGFMRLTFWDLTWDVMEPICFYVSSVYFMAGYTFFLKTSREPSFQGFYQSRFEAKQRKLMQSEDFDVGRYDELKKLFNPKPSGAVPKILGSLQN</sequence>
<organism>
    <name type="scientific">Arabidopsis thaliana</name>
    <name type="common">Mouse-ear cress</name>
    <dbReference type="NCBI Taxonomy" id="3702"/>
    <lineage>
        <taxon>Eukaryota</taxon>
        <taxon>Viridiplantae</taxon>
        <taxon>Streptophyta</taxon>
        <taxon>Embryophyta</taxon>
        <taxon>Tracheophyta</taxon>
        <taxon>Spermatophyta</taxon>
        <taxon>Magnoliopsida</taxon>
        <taxon>eudicotyledons</taxon>
        <taxon>Gunneridae</taxon>
        <taxon>Pentapetalae</taxon>
        <taxon>rosids</taxon>
        <taxon>malvids</taxon>
        <taxon>Brassicales</taxon>
        <taxon>Brassicaceae</taxon>
        <taxon>Camelineae</taxon>
        <taxon>Arabidopsis</taxon>
    </lineage>
</organism>
<dbReference type="EMBL" id="Z99708">
    <property type="protein sequence ID" value="CAB16819.1"/>
    <property type="status" value="ALT_SEQ"/>
    <property type="molecule type" value="Genomic_DNA"/>
</dbReference>
<dbReference type="EMBL" id="AL161590">
    <property type="protein sequence ID" value="CAB80348.1"/>
    <property type="status" value="ALT_SEQ"/>
    <property type="molecule type" value="Genomic_DNA"/>
</dbReference>
<dbReference type="EMBL" id="CP002687">
    <property type="protein sequence ID" value="AEE86706.1"/>
    <property type="molecule type" value="Genomic_DNA"/>
</dbReference>
<dbReference type="EMBL" id="DQ446903">
    <property type="protein sequence ID" value="ABE66118.1"/>
    <property type="molecule type" value="mRNA"/>
</dbReference>
<dbReference type="EMBL" id="DQ653251">
    <property type="protein sequence ID" value="ABK28670.1"/>
    <property type="status" value="ALT_SEQ"/>
    <property type="molecule type" value="mRNA"/>
</dbReference>
<dbReference type="PIR" id="G85434">
    <property type="entry name" value="G85434"/>
</dbReference>
<dbReference type="RefSeq" id="NP_195400.2">
    <property type="nucleotide sequence ID" value="NM_119846.4"/>
</dbReference>
<dbReference type="SMR" id="Q1PE15"/>
<dbReference type="BioGRID" id="15116">
    <property type="interactions" value="9"/>
</dbReference>
<dbReference type="FunCoup" id="Q1PE15">
    <property type="interactions" value="205"/>
</dbReference>
<dbReference type="IntAct" id="Q1PE15">
    <property type="interactions" value="8"/>
</dbReference>
<dbReference type="STRING" id="3702.Q1PE15"/>
<dbReference type="TCDB" id="1.A.77.1.2">
    <property type="family name" value="the mg(2+)/ca(2+) uniporter (mcu) family"/>
</dbReference>
<dbReference type="iPTMnet" id="Q1PE15"/>
<dbReference type="PaxDb" id="3702-AT4G36820.1"/>
<dbReference type="EnsemblPlants" id="AT4G36820.1">
    <property type="protein sequence ID" value="AT4G36820.1"/>
    <property type="gene ID" value="AT4G36820"/>
</dbReference>
<dbReference type="GeneID" id="829835"/>
<dbReference type="Gramene" id="AT4G36820.1">
    <property type="protein sequence ID" value="AT4G36820.1"/>
    <property type="gene ID" value="AT4G36820"/>
</dbReference>
<dbReference type="KEGG" id="ath:AT4G36820"/>
<dbReference type="Araport" id="AT4G36820"/>
<dbReference type="TAIR" id="AT4G36820">
    <property type="gene designation" value="MCU4"/>
</dbReference>
<dbReference type="eggNOG" id="KOG2966">
    <property type="taxonomic scope" value="Eukaryota"/>
</dbReference>
<dbReference type="HOGENOM" id="CLU_066330_0_0_1"/>
<dbReference type="InParanoid" id="Q1PE15"/>
<dbReference type="OMA" id="EREWISY"/>
<dbReference type="PhylomeDB" id="Q1PE15"/>
<dbReference type="PRO" id="PR:Q1PE15"/>
<dbReference type="Proteomes" id="UP000006548">
    <property type="component" value="Chromosome 4"/>
</dbReference>
<dbReference type="ExpressionAtlas" id="Q1PE15">
    <property type="expression patterns" value="baseline and differential"/>
</dbReference>
<dbReference type="GO" id="GO:0005743">
    <property type="term" value="C:mitochondrial inner membrane"/>
    <property type="evidence" value="ECO:0007669"/>
    <property type="project" value="UniProtKB-SubCell"/>
</dbReference>
<dbReference type="GO" id="GO:0005739">
    <property type="term" value="C:mitochondrion"/>
    <property type="evidence" value="ECO:0000314"/>
    <property type="project" value="TAIR"/>
</dbReference>
<dbReference type="GO" id="GO:0005262">
    <property type="term" value="F:calcium channel activity"/>
    <property type="evidence" value="ECO:0007669"/>
    <property type="project" value="UniProtKB-KW"/>
</dbReference>
<dbReference type="GO" id="GO:0046872">
    <property type="term" value="F:metal ion binding"/>
    <property type="evidence" value="ECO:0007669"/>
    <property type="project" value="UniProtKB-KW"/>
</dbReference>
<dbReference type="GO" id="GO:0051560">
    <property type="term" value="P:mitochondrial calcium ion homeostasis"/>
    <property type="evidence" value="ECO:0007669"/>
    <property type="project" value="InterPro"/>
</dbReference>
<dbReference type="InterPro" id="IPR006769">
    <property type="entry name" value="MCU_C"/>
</dbReference>
<dbReference type="InterPro" id="IPR039055">
    <property type="entry name" value="MCU_fam"/>
</dbReference>
<dbReference type="PANTHER" id="PTHR13462:SF31">
    <property type="entry name" value="CALCIUM UNIPORTER PROTEIN 1, MITOCHONDRIAL"/>
    <property type="match status" value="1"/>
</dbReference>
<dbReference type="PANTHER" id="PTHR13462">
    <property type="entry name" value="CALCIUM UNIPORTER PROTEIN, MITOCHONDRIAL"/>
    <property type="match status" value="1"/>
</dbReference>
<dbReference type="Pfam" id="PF04678">
    <property type="entry name" value="MCU"/>
    <property type="match status" value="1"/>
</dbReference>
<accession>Q1PE15</accession>
<accession>A0MFC5</accession>
<accession>O23200</accession>
<comment type="function">
    <text evidence="1">Mitochondrial inner membrane calcium uniporter that mediates calcium uptake into mitochondria (By similarity). Constitutes a pore-forming and calcium-conducting subunit (By similarity). Mitochondrial calcium homeostasis plays key roles in cellular physiology and regulates cell bioenergetics, cytoplasmic calcium signals and activation of cell death pathways (By similarity).</text>
</comment>
<comment type="catalytic activity">
    <reaction evidence="1">
        <text>Ca(2+)(in) = Ca(2+)(out)</text>
        <dbReference type="Rhea" id="RHEA:29671"/>
        <dbReference type="ChEBI" id="CHEBI:29108"/>
    </reaction>
</comment>
<comment type="subcellular location">
    <subcellularLocation>
        <location evidence="6">Mitochondrion inner membrane</location>
        <topology evidence="3">Multi-pass membrane protein</topology>
    </subcellularLocation>
</comment>
<comment type="similarity">
    <text evidence="5">Belongs to the MCU (TC 1.A.77) family.</text>
</comment>
<comment type="sequence caution" evidence="5">
    <conflict type="erroneous termination">
        <sequence resource="EMBL-CDS" id="ABK28670"/>
    </conflict>
    <text>Extended C-terminus.</text>
</comment>
<comment type="sequence caution" evidence="5">
    <conflict type="erroneous gene model prediction">
        <sequence resource="EMBL-CDS" id="CAB16819"/>
    </conflict>
</comment>
<comment type="sequence caution" evidence="5">
    <conflict type="erroneous gene model prediction">
        <sequence resource="EMBL-CDS" id="CAB80348"/>
    </conflict>
</comment>
<feature type="transit peptide" description="Mitochondrion" evidence="3">
    <location>
        <begin position="1"/>
        <end position="36"/>
    </location>
</feature>
<feature type="chain" id="PRO_0000431370" description="Calcium uniporter protein 4, mitochondrial">
    <location>
        <begin position="37"/>
        <end position="338"/>
    </location>
</feature>
<feature type="transmembrane region" description="Helical; Name=1" evidence="3">
    <location>
        <begin position="233"/>
        <end position="253"/>
    </location>
</feature>
<feature type="transmembrane region" description="Helical; Name=2" evidence="3">
    <location>
        <begin position="263"/>
        <end position="280"/>
    </location>
</feature>
<feature type="short sequence motif" description="Selectivity filter" evidence="2">
    <location>
        <begin position="257"/>
        <end position="265"/>
    </location>
</feature>
<feature type="binding site" evidence="2">
    <location>
        <position position="261"/>
    </location>
    <ligand>
        <name>Ca(2+)</name>
        <dbReference type="ChEBI" id="CHEBI:29108"/>
    </ligand>
</feature>
<proteinExistence type="evidence at transcript level"/>
<protein>
    <recommendedName>
        <fullName evidence="5">Calcium uniporter protein 4, mitochondrial</fullName>
        <shortName evidence="4">AtMCU4</shortName>
    </recommendedName>
</protein>
<keyword id="KW-0106">Calcium</keyword>
<keyword id="KW-0107">Calcium channel</keyword>
<keyword id="KW-0109">Calcium transport</keyword>
<keyword id="KW-0407">Ion channel</keyword>
<keyword id="KW-0406">Ion transport</keyword>
<keyword id="KW-0472">Membrane</keyword>
<keyword id="KW-0479">Metal-binding</keyword>
<keyword id="KW-0496">Mitochondrion</keyword>
<keyword id="KW-0999">Mitochondrion inner membrane</keyword>
<keyword id="KW-1185">Reference proteome</keyword>
<keyword id="KW-0809">Transit peptide</keyword>
<keyword id="KW-0812">Transmembrane</keyword>
<keyword id="KW-1133">Transmembrane helix</keyword>
<keyword id="KW-0813">Transport</keyword>